<feature type="signal peptide" evidence="7">
    <location>
        <begin position="1"/>
        <end position="21"/>
    </location>
</feature>
<feature type="chain" id="PRO_0000007666" description="Protein kinase C-binding protein NELL2">
    <location>
        <begin position="22"/>
        <end position="816"/>
    </location>
</feature>
<feature type="domain" description="Laminin G-like" evidence="5">
    <location>
        <begin position="64"/>
        <end position="228"/>
    </location>
</feature>
<feature type="domain" description="VWFC 1" evidence="6">
    <location>
        <begin position="272"/>
        <end position="331"/>
    </location>
</feature>
<feature type="domain" description="EGF-like 1" evidence="4">
    <location>
        <begin position="397"/>
        <end position="439"/>
    </location>
</feature>
<feature type="domain" description="EGF-like 2; calcium-binding" evidence="4">
    <location>
        <begin position="440"/>
        <end position="481"/>
    </location>
</feature>
<feature type="domain" description="EGF-like 3; calcium-binding" evidence="4">
    <location>
        <begin position="482"/>
        <end position="522"/>
    </location>
</feature>
<feature type="domain" description="EGF-like 4" evidence="4">
    <location>
        <begin position="523"/>
        <end position="553"/>
    </location>
</feature>
<feature type="domain" description="EGF-like 5; calcium-binding" evidence="4">
    <location>
        <begin position="555"/>
        <end position="601"/>
    </location>
</feature>
<feature type="domain" description="EGF-like 6; calcium-binding" evidence="4">
    <location>
        <begin position="602"/>
        <end position="637"/>
    </location>
</feature>
<feature type="domain" description="VWFC 2" evidence="6">
    <location>
        <begin position="638"/>
        <end position="693"/>
    </location>
</feature>
<feature type="domain" description="VWFC 3" evidence="6">
    <location>
        <begin position="698"/>
        <end position="756"/>
    </location>
</feature>
<feature type="binding site" evidence="8 13">
    <location>
        <position position="440"/>
    </location>
    <ligand>
        <name>Ca(2+)</name>
        <dbReference type="ChEBI" id="CHEBI:29108"/>
    </ligand>
</feature>
<feature type="binding site" evidence="8 13">
    <location>
        <position position="441"/>
    </location>
    <ligand>
        <name>Ca(2+)</name>
        <dbReference type="ChEBI" id="CHEBI:29108"/>
    </ligand>
</feature>
<feature type="binding site" evidence="8 13">
    <location>
        <position position="443"/>
    </location>
    <ligand>
        <name>Ca(2+)</name>
        <dbReference type="ChEBI" id="CHEBI:29108"/>
    </ligand>
</feature>
<feature type="binding site" evidence="8 13">
    <location>
        <position position="459"/>
    </location>
    <ligand>
        <name>Ca(2+)</name>
        <dbReference type="ChEBI" id="CHEBI:29108"/>
    </ligand>
</feature>
<feature type="binding site" evidence="8 13">
    <location>
        <position position="460"/>
    </location>
    <ligand>
        <name>Ca(2+)</name>
        <dbReference type="ChEBI" id="CHEBI:29108"/>
    </ligand>
</feature>
<feature type="binding site" evidence="8 13">
    <location>
        <position position="463"/>
    </location>
    <ligand>
        <name>Ca(2+)</name>
        <dbReference type="ChEBI" id="CHEBI:29108"/>
    </ligand>
</feature>
<feature type="binding site" evidence="8 13">
    <location>
        <position position="555"/>
    </location>
    <ligand>
        <name>Ca(2+)</name>
        <dbReference type="ChEBI" id="CHEBI:29108"/>
    </ligand>
</feature>
<feature type="binding site" evidence="8 13">
    <location>
        <position position="556"/>
    </location>
    <ligand>
        <name>Ca(2+)</name>
        <dbReference type="ChEBI" id="CHEBI:29108"/>
    </ligand>
</feature>
<feature type="binding site" evidence="8 13">
    <location>
        <position position="558"/>
    </location>
    <ligand>
        <name>Ca(2+)</name>
        <dbReference type="ChEBI" id="CHEBI:29108"/>
    </ligand>
</feature>
<feature type="binding site" evidence="8 13">
    <location>
        <position position="574"/>
    </location>
    <ligand>
        <name>Ca(2+)</name>
        <dbReference type="ChEBI" id="CHEBI:29108"/>
    </ligand>
</feature>
<feature type="binding site" evidence="8 13">
    <location>
        <position position="575"/>
    </location>
    <ligand>
        <name>Ca(2+)</name>
        <dbReference type="ChEBI" id="CHEBI:29108"/>
    </ligand>
</feature>
<feature type="binding site" evidence="8 13">
    <location>
        <position position="578"/>
    </location>
    <ligand>
        <name>Ca(2+)</name>
        <dbReference type="ChEBI" id="CHEBI:29108"/>
    </ligand>
</feature>
<feature type="binding site" evidence="8 13">
    <location>
        <position position="602"/>
    </location>
    <ligand>
        <name>Ca(2+)</name>
        <dbReference type="ChEBI" id="CHEBI:29108"/>
    </ligand>
</feature>
<feature type="binding site" evidence="8 13">
    <location>
        <position position="603"/>
    </location>
    <ligand>
        <name>Ca(2+)</name>
        <dbReference type="ChEBI" id="CHEBI:29108"/>
    </ligand>
</feature>
<feature type="binding site" evidence="8 13">
    <location>
        <position position="605"/>
    </location>
    <ligand>
        <name>Ca(2+)</name>
        <dbReference type="ChEBI" id="CHEBI:29108"/>
    </ligand>
</feature>
<feature type="binding site" evidence="8 13">
    <location>
        <position position="621"/>
    </location>
    <ligand>
        <name>Ca(2+)</name>
        <dbReference type="ChEBI" id="CHEBI:29108"/>
    </ligand>
</feature>
<feature type="binding site" evidence="8 13">
    <location>
        <position position="622"/>
    </location>
    <ligand>
        <name>Ca(2+)</name>
        <dbReference type="ChEBI" id="CHEBI:29108"/>
    </ligand>
</feature>
<feature type="binding site" evidence="8 13">
    <location>
        <position position="625"/>
    </location>
    <ligand>
        <name>Ca(2+)</name>
        <dbReference type="ChEBI" id="CHEBI:29108"/>
    </ligand>
</feature>
<feature type="glycosylation site" description="N-linked (GlcNAc...) asparagine" evidence="3">
    <location>
        <position position="53"/>
    </location>
</feature>
<feature type="glycosylation site" description="N-linked (GlcNAc...) asparagine" evidence="3">
    <location>
        <position position="225"/>
    </location>
</feature>
<feature type="glycosylation site" description="N-linked (GlcNAc...) asparagine" evidence="3">
    <location>
        <position position="293"/>
    </location>
</feature>
<feature type="glycosylation site" description="N-linked (GlcNAc...) asparagine" evidence="3">
    <location>
        <position position="298"/>
    </location>
</feature>
<feature type="glycosylation site" description="N-linked (GlcNAc...) asparagine" evidence="8 13">
    <location>
        <position position="517"/>
    </location>
</feature>
<feature type="glycosylation site" description="O-linked (GlcNAc...) threonine" evidence="8 13">
    <location>
        <position position="548"/>
    </location>
</feature>
<feature type="glycosylation site" description="N-linked (GlcNAc...) asparagine" evidence="3">
    <location>
        <position position="615"/>
    </location>
</feature>
<feature type="glycosylation site" description="N-linked (GlcNAc...) asparagine" evidence="3">
    <location>
        <position position="635"/>
    </location>
</feature>
<feature type="disulfide bond" evidence="8 13">
    <location>
        <begin position="401"/>
        <end position="413"/>
    </location>
</feature>
<feature type="disulfide bond" evidence="8 13">
    <location>
        <begin position="407"/>
        <end position="422"/>
    </location>
</feature>
<feature type="disulfide bond" evidence="8 13">
    <location>
        <begin position="424"/>
        <end position="438"/>
    </location>
</feature>
<feature type="disulfide bond" evidence="8 13">
    <location>
        <begin position="444"/>
        <end position="457"/>
    </location>
</feature>
<feature type="disulfide bond" evidence="8 13">
    <location>
        <begin position="451"/>
        <end position="466"/>
    </location>
</feature>
<feature type="disulfide bond" evidence="8 13">
    <location>
        <begin position="468"/>
        <end position="480"/>
    </location>
</feature>
<feature type="disulfide bond" evidence="8 13">
    <location>
        <begin position="486"/>
        <end position="499"/>
    </location>
</feature>
<feature type="disulfide bond" evidence="8 13">
    <location>
        <begin position="493"/>
        <end position="508"/>
    </location>
</feature>
<feature type="disulfide bond" evidence="8 13">
    <location>
        <begin position="510"/>
        <end position="521"/>
    </location>
</feature>
<feature type="disulfide bond" evidence="8 13">
    <location>
        <begin position="525"/>
        <end position="535"/>
    </location>
</feature>
<feature type="disulfide bond" evidence="8 13">
    <location>
        <begin position="529"/>
        <end position="541"/>
    </location>
</feature>
<feature type="disulfide bond" evidence="8 13">
    <location>
        <begin position="543"/>
        <end position="552"/>
    </location>
</feature>
<feature type="disulfide bond" evidence="8 13">
    <location>
        <begin position="559"/>
        <end position="572"/>
    </location>
</feature>
<feature type="disulfide bond" evidence="8 13">
    <location>
        <begin position="566"/>
        <end position="581"/>
    </location>
</feature>
<feature type="disulfide bond" evidence="8 13">
    <location>
        <begin position="583"/>
        <end position="600"/>
    </location>
</feature>
<feature type="disulfide bond" evidence="8 13">
    <location>
        <begin position="606"/>
        <end position="619"/>
    </location>
</feature>
<feature type="disulfide bond" evidence="8 13">
    <location>
        <begin position="613"/>
        <end position="628"/>
    </location>
</feature>
<feature type="disulfide bond" evidence="8 13">
    <location>
        <begin position="630"/>
        <end position="636"/>
    </location>
</feature>
<feature type="splice variant" id="VSP_043869" description="In isoform 4." evidence="9 10">
    <original>MESRVLLRTFCLIFGLGA</original>
    <variation>METGLGAPLFKAWLLIS</variation>
    <location>
        <begin position="1"/>
        <end position="18"/>
    </location>
</feature>
<feature type="splice variant" id="VSP_043801" description="In isoform 2." evidence="9">
    <original>M</original>
    <variation>MSIRRLLILILKIGRRWTELIRTM</variation>
    <location>
        <position position="1"/>
    </location>
</feature>
<feature type="splice variant" id="VSP_043802" description="In isoform 3." evidence="9">
    <original>M</original>
    <variation>MGFPPLLKGQASATRSSLASCSWVVFFLSCLSRHAPEIEGGRRWTELIRTM</variation>
    <location>
        <position position="1"/>
    </location>
</feature>
<feature type="sequence variant" id="VAR_048987" description="In dbSNP:rs2658973.">
    <original>V</original>
    <variation>I</variation>
    <location>
        <position position="5"/>
    </location>
</feature>
<feature type="sequence variant" id="VAR_048988" description="In dbSNP:rs17574839.">
    <original>N</original>
    <variation>D</variation>
    <location>
        <position position="347"/>
    </location>
</feature>
<feature type="sequence variant" id="VAR_048989" description="In dbSNP:rs1050710.">
    <original>P</original>
    <variation>L</variation>
    <location>
        <position position="631"/>
    </location>
</feature>
<feature type="mutagenesis site" description="Diminished binding to ROBO3; when associated with A-450." evidence="8">
    <original>R</original>
    <variation>A</variation>
    <location>
        <position position="448"/>
    </location>
</feature>
<feature type="mutagenesis site" description="Diminished binding to ROBO3; when associated with A-448." evidence="8">
    <original>Y</original>
    <variation>A</variation>
    <location>
        <position position="450"/>
    </location>
</feature>
<feature type="mutagenesis site" description="Diminished binding to ROBO3." evidence="8">
    <original>R</original>
    <variation>A</variation>
    <location>
        <position position="452"/>
    </location>
</feature>
<feature type="mutagenesis site" description="Abolished binding to ROBO3." evidence="8">
    <original>D</original>
    <variation>A</variation>
    <location>
        <position position="476"/>
    </location>
</feature>
<feature type="mutagenesis site" description="Abolished binding to ROBO3; when associated with A-478." evidence="8">
    <original>D</original>
    <variation>A</variation>
    <location>
        <position position="477"/>
    </location>
</feature>
<feature type="mutagenesis site" description="Abolished binding to ROBO3; when associated with A-477." evidence="8">
    <original>Y</original>
    <variation>A</variation>
    <location>
        <position position="478"/>
    </location>
</feature>
<feature type="mutagenesis site" description="Abolished binding to ROBO3; when associated with A-500." evidence="8">
    <original>L</original>
    <variation>A</variation>
    <location>
        <position position="498"/>
    </location>
</feature>
<feature type="mutagenesis site" description="Abolished binding to ROBO3; when associated with A-498." evidence="8">
    <original>F</original>
    <variation>A</variation>
    <location>
        <position position="500"/>
    </location>
</feature>
<feature type="mutagenesis site" description="Diminished binding to ROBO3." evidence="8">
    <original>V</original>
    <variation>A</variation>
    <location>
        <position position="509"/>
    </location>
</feature>
<feature type="sequence conflict" description="In Ref. 3; BAH12990." evidence="11" ref="3">
    <original>S</original>
    <variation>P</variation>
    <location>
        <position position="353"/>
    </location>
</feature>
<feature type="sequence conflict" description="In Ref. 3; BAH12990." evidence="11" ref="3">
    <original>N</original>
    <variation>D</variation>
    <location>
        <position position="454"/>
    </location>
</feature>
<feature type="sequence conflict" description="In Ref. 3; BAH14331." evidence="11" ref="3">
    <original>N</original>
    <variation>D</variation>
    <location>
        <position position="489"/>
    </location>
</feature>
<feature type="sequence conflict" description="In Ref. 3; BAH14331." evidence="11" ref="3">
    <original>C</original>
    <variation>S</variation>
    <location>
        <position position="636"/>
    </location>
</feature>
<feature type="helix" evidence="14">
    <location>
        <begin position="400"/>
        <end position="403"/>
    </location>
</feature>
<feature type="strand" evidence="14">
    <location>
        <begin position="411"/>
        <end position="415"/>
    </location>
</feature>
<feature type="strand" evidence="14">
    <location>
        <begin position="420"/>
        <end position="424"/>
    </location>
</feature>
<feature type="strand" evidence="14">
    <location>
        <begin position="428"/>
        <end position="430"/>
    </location>
</feature>
<feature type="strand" evidence="14">
    <location>
        <begin position="432"/>
        <end position="440"/>
    </location>
</feature>
<feature type="strand" evidence="14">
    <location>
        <begin position="449"/>
        <end position="451"/>
    </location>
</feature>
<feature type="strand" evidence="14">
    <location>
        <begin position="455"/>
        <end position="460"/>
    </location>
</feature>
<feature type="strand" evidence="14">
    <location>
        <begin position="463"/>
        <end position="468"/>
    </location>
</feature>
<feature type="strand" evidence="14">
    <location>
        <begin position="473"/>
        <end position="476"/>
    </location>
</feature>
<feature type="strand" evidence="14">
    <location>
        <begin position="479"/>
        <end position="483"/>
    </location>
</feature>
<feature type="strand" evidence="14">
    <location>
        <begin position="497"/>
        <end position="502"/>
    </location>
</feature>
<feature type="strand" evidence="14">
    <location>
        <begin position="505"/>
        <end position="510"/>
    </location>
</feature>
<feature type="strand" evidence="14">
    <location>
        <begin position="514"/>
        <end position="516"/>
    </location>
</feature>
<feature type="strand" evidence="14">
    <location>
        <begin position="518"/>
        <end position="523"/>
    </location>
</feature>
<feature type="strand" evidence="14">
    <location>
        <begin position="534"/>
        <end position="537"/>
    </location>
</feature>
<feature type="strand" evidence="14">
    <location>
        <begin position="540"/>
        <end position="542"/>
    </location>
</feature>
<feature type="strand" evidence="14">
    <location>
        <begin position="547"/>
        <end position="549"/>
    </location>
</feature>
<feature type="turn" evidence="14">
    <location>
        <begin position="558"/>
        <end position="560"/>
    </location>
</feature>
<feature type="strand" evidence="14">
    <location>
        <begin position="568"/>
        <end position="575"/>
    </location>
</feature>
<feature type="strand" evidence="14">
    <location>
        <begin position="578"/>
        <end position="583"/>
    </location>
</feature>
<feature type="strand" evidence="14">
    <location>
        <begin position="587"/>
        <end position="589"/>
    </location>
</feature>
<feature type="strand" evidence="14">
    <location>
        <begin position="599"/>
        <end position="602"/>
    </location>
</feature>
<feature type="strand" evidence="14">
    <location>
        <begin position="618"/>
        <end position="621"/>
    </location>
</feature>
<feature type="strand" evidence="14">
    <location>
        <begin position="626"/>
        <end position="629"/>
    </location>
</feature>
<keyword id="KW-0002">3D-structure</keyword>
<keyword id="KW-0025">Alternative splicing</keyword>
<keyword id="KW-0106">Calcium</keyword>
<keyword id="KW-0903">Direct protein sequencing</keyword>
<keyword id="KW-1015">Disulfide bond</keyword>
<keyword id="KW-0245">EGF-like domain</keyword>
<keyword id="KW-0325">Glycoprotein</keyword>
<keyword id="KW-0524">Neurogenesis</keyword>
<keyword id="KW-1267">Proteomics identification</keyword>
<keyword id="KW-1185">Reference proteome</keyword>
<keyword id="KW-0677">Repeat</keyword>
<keyword id="KW-0964">Secreted</keyword>
<keyword id="KW-0732">Signal</keyword>
<proteinExistence type="evidence at protein level"/>
<reference key="1">
    <citation type="journal article" date="1996" name="Genomics">
        <title>Cloning and characterization of two novel human cDNAs (NELL1 and NELL2) encoding proteins with six EGF-like repeats.</title>
        <authorList>
            <person name="Watanabe T.K."/>
            <person name="Katagiri T."/>
            <person name="Suzuki M."/>
            <person name="Shimizu F."/>
            <person name="Fujiwara T."/>
            <person name="Kanemoto N."/>
            <person name="Nakamura Y."/>
            <person name="Hirai Y."/>
            <person name="Maekawa H."/>
            <person name="Takahashi E."/>
        </authorList>
    </citation>
    <scope>NUCLEOTIDE SEQUENCE [MRNA] (ISOFORM 1)</scope>
    <source>
        <tissue>Brain</tissue>
    </source>
</reference>
<reference key="2">
    <citation type="submission" date="1996-11" db="EMBL/GenBank/DDBJ databases">
        <title>Biological functions of a novel human gene, hucep-12, which is specifically expressed in the central nervous system.</title>
        <authorList>
            <person name="Yoshimoto M."/>
            <person name="Yazaki M."/>
            <person name="Takayama K."/>
            <person name="Matsumoto K."/>
        </authorList>
    </citation>
    <scope>NUCLEOTIDE SEQUENCE [MRNA] (ISOFORM 4)</scope>
    <source>
        <tissue>Brain</tissue>
    </source>
</reference>
<reference key="3">
    <citation type="journal article" date="2004" name="Nat. Genet.">
        <title>Complete sequencing and characterization of 21,243 full-length human cDNAs.</title>
        <authorList>
            <person name="Ota T."/>
            <person name="Suzuki Y."/>
            <person name="Nishikawa T."/>
            <person name="Otsuki T."/>
            <person name="Sugiyama T."/>
            <person name="Irie R."/>
            <person name="Wakamatsu A."/>
            <person name="Hayashi K."/>
            <person name="Sato H."/>
            <person name="Nagai K."/>
            <person name="Kimura K."/>
            <person name="Makita H."/>
            <person name="Sekine M."/>
            <person name="Obayashi M."/>
            <person name="Nishi T."/>
            <person name="Shibahara T."/>
            <person name="Tanaka T."/>
            <person name="Ishii S."/>
            <person name="Yamamoto J."/>
            <person name="Saito K."/>
            <person name="Kawai Y."/>
            <person name="Isono Y."/>
            <person name="Nakamura Y."/>
            <person name="Nagahari K."/>
            <person name="Murakami K."/>
            <person name="Yasuda T."/>
            <person name="Iwayanagi T."/>
            <person name="Wagatsuma M."/>
            <person name="Shiratori A."/>
            <person name="Sudo H."/>
            <person name="Hosoiri T."/>
            <person name="Kaku Y."/>
            <person name="Kodaira H."/>
            <person name="Kondo H."/>
            <person name="Sugawara M."/>
            <person name="Takahashi M."/>
            <person name="Kanda K."/>
            <person name="Yokoi T."/>
            <person name="Furuya T."/>
            <person name="Kikkawa E."/>
            <person name="Omura Y."/>
            <person name="Abe K."/>
            <person name="Kamihara K."/>
            <person name="Katsuta N."/>
            <person name="Sato K."/>
            <person name="Tanikawa M."/>
            <person name="Yamazaki M."/>
            <person name="Ninomiya K."/>
            <person name="Ishibashi T."/>
            <person name="Yamashita H."/>
            <person name="Murakawa K."/>
            <person name="Fujimori K."/>
            <person name="Tanai H."/>
            <person name="Kimata M."/>
            <person name="Watanabe M."/>
            <person name="Hiraoka S."/>
            <person name="Chiba Y."/>
            <person name="Ishida S."/>
            <person name="Ono Y."/>
            <person name="Takiguchi S."/>
            <person name="Watanabe S."/>
            <person name="Yosida M."/>
            <person name="Hotuta T."/>
            <person name="Kusano J."/>
            <person name="Kanehori K."/>
            <person name="Takahashi-Fujii A."/>
            <person name="Hara H."/>
            <person name="Tanase T.-O."/>
            <person name="Nomura Y."/>
            <person name="Togiya S."/>
            <person name="Komai F."/>
            <person name="Hara R."/>
            <person name="Takeuchi K."/>
            <person name="Arita M."/>
            <person name="Imose N."/>
            <person name="Musashino K."/>
            <person name="Yuuki H."/>
            <person name="Oshima A."/>
            <person name="Sasaki N."/>
            <person name="Aotsuka S."/>
            <person name="Yoshikawa Y."/>
            <person name="Matsunawa H."/>
            <person name="Ichihara T."/>
            <person name="Shiohata N."/>
            <person name="Sano S."/>
            <person name="Moriya S."/>
            <person name="Momiyama H."/>
            <person name="Satoh N."/>
            <person name="Takami S."/>
            <person name="Terashima Y."/>
            <person name="Suzuki O."/>
            <person name="Nakagawa S."/>
            <person name="Senoh A."/>
            <person name="Mizoguchi H."/>
            <person name="Goto Y."/>
            <person name="Shimizu F."/>
            <person name="Wakebe H."/>
            <person name="Hishigaki H."/>
            <person name="Watanabe T."/>
            <person name="Sugiyama A."/>
            <person name="Takemoto M."/>
            <person name="Kawakami B."/>
            <person name="Yamazaki M."/>
            <person name="Watanabe K."/>
            <person name="Kumagai A."/>
            <person name="Itakura S."/>
            <person name="Fukuzumi Y."/>
            <person name="Fujimori Y."/>
            <person name="Komiyama M."/>
            <person name="Tashiro H."/>
            <person name="Tanigami A."/>
            <person name="Fujiwara T."/>
            <person name="Ono T."/>
            <person name="Yamada K."/>
            <person name="Fujii Y."/>
            <person name="Ozaki K."/>
            <person name="Hirao M."/>
            <person name="Ohmori Y."/>
            <person name="Kawabata A."/>
            <person name="Hikiji T."/>
            <person name="Kobatake N."/>
            <person name="Inagaki H."/>
            <person name="Ikema Y."/>
            <person name="Okamoto S."/>
            <person name="Okitani R."/>
            <person name="Kawakami T."/>
            <person name="Noguchi S."/>
            <person name="Itoh T."/>
            <person name="Shigeta K."/>
            <person name="Senba T."/>
            <person name="Matsumura K."/>
            <person name="Nakajima Y."/>
            <person name="Mizuno T."/>
            <person name="Morinaga M."/>
            <person name="Sasaki M."/>
            <person name="Togashi T."/>
            <person name="Oyama M."/>
            <person name="Hata H."/>
            <person name="Watanabe M."/>
            <person name="Komatsu T."/>
            <person name="Mizushima-Sugano J."/>
            <person name="Satoh T."/>
            <person name="Shirai Y."/>
            <person name="Takahashi Y."/>
            <person name="Nakagawa K."/>
            <person name="Okumura K."/>
            <person name="Nagase T."/>
            <person name="Nomura N."/>
            <person name="Kikuchi H."/>
            <person name="Masuho Y."/>
            <person name="Yamashita R."/>
            <person name="Nakai K."/>
            <person name="Yada T."/>
            <person name="Nakamura Y."/>
            <person name="Ohara O."/>
            <person name="Isogai T."/>
            <person name="Sugano S."/>
        </authorList>
    </citation>
    <scope>NUCLEOTIDE SEQUENCE [LARGE SCALE MRNA] (ISOFORMS 2; 3 AND 4)</scope>
    <source>
        <tissue>Amygdala</tissue>
        <tissue>Brain</tissue>
        <tissue>Hippocampus</tissue>
    </source>
</reference>
<reference key="4">
    <citation type="journal article" date="2006" name="Nature">
        <title>The finished DNA sequence of human chromosome 12.</title>
        <authorList>
            <person name="Scherer S.E."/>
            <person name="Muzny D.M."/>
            <person name="Buhay C.J."/>
            <person name="Chen R."/>
            <person name="Cree A."/>
            <person name="Ding Y."/>
            <person name="Dugan-Rocha S."/>
            <person name="Gill R."/>
            <person name="Gunaratne P."/>
            <person name="Harris R.A."/>
            <person name="Hawes A.C."/>
            <person name="Hernandez J."/>
            <person name="Hodgson A.V."/>
            <person name="Hume J."/>
            <person name="Jackson A."/>
            <person name="Khan Z.M."/>
            <person name="Kovar-Smith C."/>
            <person name="Lewis L.R."/>
            <person name="Lozado R.J."/>
            <person name="Metzker M.L."/>
            <person name="Milosavljevic A."/>
            <person name="Miner G.R."/>
            <person name="Montgomery K.T."/>
            <person name="Morgan M.B."/>
            <person name="Nazareth L.V."/>
            <person name="Scott G."/>
            <person name="Sodergren E."/>
            <person name="Song X.-Z."/>
            <person name="Steffen D."/>
            <person name="Lovering R.C."/>
            <person name="Wheeler D.A."/>
            <person name="Worley K.C."/>
            <person name="Yuan Y."/>
            <person name="Zhang Z."/>
            <person name="Adams C.Q."/>
            <person name="Ansari-Lari M.A."/>
            <person name="Ayele M."/>
            <person name="Brown M.J."/>
            <person name="Chen G."/>
            <person name="Chen Z."/>
            <person name="Clerc-Blankenburg K.P."/>
            <person name="Davis C."/>
            <person name="Delgado O."/>
            <person name="Dinh H.H."/>
            <person name="Draper H."/>
            <person name="Gonzalez-Garay M.L."/>
            <person name="Havlak P."/>
            <person name="Jackson L.R."/>
            <person name="Jacob L.S."/>
            <person name="Kelly S.H."/>
            <person name="Li L."/>
            <person name="Li Z."/>
            <person name="Liu J."/>
            <person name="Liu W."/>
            <person name="Lu J."/>
            <person name="Maheshwari M."/>
            <person name="Nguyen B.-V."/>
            <person name="Okwuonu G.O."/>
            <person name="Pasternak S."/>
            <person name="Perez L.M."/>
            <person name="Plopper F.J.H."/>
            <person name="Santibanez J."/>
            <person name="Shen H."/>
            <person name="Tabor P.E."/>
            <person name="Verduzco D."/>
            <person name="Waldron L."/>
            <person name="Wang Q."/>
            <person name="Williams G.A."/>
            <person name="Zhang J."/>
            <person name="Zhou J."/>
            <person name="Allen C.C."/>
            <person name="Amin A.G."/>
            <person name="Anyalebechi V."/>
            <person name="Bailey M."/>
            <person name="Barbaria J.A."/>
            <person name="Bimage K.E."/>
            <person name="Bryant N.P."/>
            <person name="Burch P.E."/>
            <person name="Burkett C.E."/>
            <person name="Burrell K.L."/>
            <person name="Calderon E."/>
            <person name="Cardenas V."/>
            <person name="Carter K."/>
            <person name="Casias K."/>
            <person name="Cavazos I."/>
            <person name="Cavazos S.R."/>
            <person name="Ceasar H."/>
            <person name="Chacko J."/>
            <person name="Chan S.N."/>
            <person name="Chavez D."/>
            <person name="Christopoulos C."/>
            <person name="Chu J."/>
            <person name="Cockrell R."/>
            <person name="Cox C.D."/>
            <person name="Dang M."/>
            <person name="Dathorne S.R."/>
            <person name="David R."/>
            <person name="Davis C.M."/>
            <person name="Davy-Carroll L."/>
            <person name="Deshazo D.R."/>
            <person name="Donlin J.E."/>
            <person name="D'Souza L."/>
            <person name="Eaves K.A."/>
            <person name="Egan A."/>
            <person name="Emery-Cohen A.J."/>
            <person name="Escotto M."/>
            <person name="Flagg N."/>
            <person name="Forbes L.D."/>
            <person name="Gabisi A.M."/>
            <person name="Garza M."/>
            <person name="Hamilton C."/>
            <person name="Henderson N."/>
            <person name="Hernandez O."/>
            <person name="Hines S."/>
            <person name="Hogues M.E."/>
            <person name="Huang M."/>
            <person name="Idlebird D.G."/>
            <person name="Johnson R."/>
            <person name="Jolivet A."/>
            <person name="Jones S."/>
            <person name="Kagan R."/>
            <person name="King L.M."/>
            <person name="Leal B."/>
            <person name="Lebow H."/>
            <person name="Lee S."/>
            <person name="LeVan J.M."/>
            <person name="Lewis L.C."/>
            <person name="London P."/>
            <person name="Lorensuhewa L.M."/>
            <person name="Loulseged H."/>
            <person name="Lovett D.A."/>
            <person name="Lucier A."/>
            <person name="Lucier R.L."/>
            <person name="Ma J."/>
            <person name="Madu R.C."/>
            <person name="Mapua P."/>
            <person name="Martindale A.D."/>
            <person name="Martinez E."/>
            <person name="Massey E."/>
            <person name="Mawhiney S."/>
            <person name="Meador M.G."/>
            <person name="Mendez S."/>
            <person name="Mercado C."/>
            <person name="Mercado I.C."/>
            <person name="Merritt C.E."/>
            <person name="Miner Z.L."/>
            <person name="Minja E."/>
            <person name="Mitchell T."/>
            <person name="Mohabbat F."/>
            <person name="Mohabbat K."/>
            <person name="Montgomery B."/>
            <person name="Moore N."/>
            <person name="Morris S."/>
            <person name="Munidasa M."/>
            <person name="Ngo R.N."/>
            <person name="Nguyen N.B."/>
            <person name="Nickerson E."/>
            <person name="Nwaokelemeh O.O."/>
            <person name="Nwokenkwo S."/>
            <person name="Obregon M."/>
            <person name="Oguh M."/>
            <person name="Oragunye N."/>
            <person name="Oviedo R.J."/>
            <person name="Parish B.J."/>
            <person name="Parker D.N."/>
            <person name="Parrish J."/>
            <person name="Parks K.L."/>
            <person name="Paul H.A."/>
            <person name="Payton B.A."/>
            <person name="Perez A."/>
            <person name="Perrin W."/>
            <person name="Pickens A."/>
            <person name="Primus E.L."/>
            <person name="Pu L.-L."/>
            <person name="Puazo M."/>
            <person name="Quiles M.M."/>
            <person name="Quiroz J.B."/>
            <person name="Rabata D."/>
            <person name="Reeves K."/>
            <person name="Ruiz S.J."/>
            <person name="Shao H."/>
            <person name="Sisson I."/>
            <person name="Sonaike T."/>
            <person name="Sorelle R.P."/>
            <person name="Sutton A.E."/>
            <person name="Svatek A.F."/>
            <person name="Svetz L.A."/>
            <person name="Tamerisa K.S."/>
            <person name="Taylor T.R."/>
            <person name="Teague B."/>
            <person name="Thomas N."/>
            <person name="Thorn R.D."/>
            <person name="Trejos Z.Y."/>
            <person name="Trevino B.K."/>
            <person name="Ukegbu O.N."/>
            <person name="Urban J.B."/>
            <person name="Vasquez L.I."/>
            <person name="Vera V.A."/>
            <person name="Villasana D.M."/>
            <person name="Wang L."/>
            <person name="Ward-Moore S."/>
            <person name="Warren J.T."/>
            <person name="Wei X."/>
            <person name="White F."/>
            <person name="Williamson A.L."/>
            <person name="Wleczyk R."/>
            <person name="Wooden H.S."/>
            <person name="Wooden S.H."/>
            <person name="Yen J."/>
            <person name="Yoon L."/>
            <person name="Yoon V."/>
            <person name="Zorrilla S.E."/>
            <person name="Nelson D."/>
            <person name="Kucherlapati R."/>
            <person name="Weinstock G."/>
            <person name="Gibbs R.A."/>
        </authorList>
    </citation>
    <scope>NUCLEOTIDE SEQUENCE [LARGE SCALE GENOMIC DNA]</scope>
</reference>
<reference key="5">
    <citation type="submission" date="2005-07" db="EMBL/GenBank/DDBJ databases">
        <authorList>
            <person name="Mural R.J."/>
            <person name="Istrail S."/>
            <person name="Sutton G."/>
            <person name="Florea L."/>
            <person name="Halpern A.L."/>
            <person name="Mobarry C.M."/>
            <person name="Lippert R."/>
            <person name="Walenz B."/>
            <person name="Shatkay H."/>
            <person name="Dew I."/>
            <person name="Miller J.R."/>
            <person name="Flanigan M.J."/>
            <person name="Edwards N.J."/>
            <person name="Bolanos R."/>
            <person name="Fasulo D."/>
            <person name="Halldorsson B.V."/>
            <person name="Hannenhalli S."/>
            <person name="Turner R."/>
            <person name="Yooseph S."/>
            <person name="Lu F."/>
            <person name="Nusskern D.R."/>
            <person name="Shue B.C."/>
            <person name="Zheng X.H."/>
            <person name="Zhong F."/>
            <person name="Delcher A.L."/>
            <person name="Huson D.H."/>
            <person name="Kravitz S.A."/>
            <person name="Mouchard L."/>
            <person name="Reinert K."/>
            <person name="Remington K.A."/>
            <person name="Clark A.G."/>
            <person name="Waterman M.S."/>
            <person name="Eichler E.E."/>
            <person name="Adams M.D."/>
            <person name="Hunkapiller M.W."/>
            <person name="Myers E.W."/>
            <person name="Venter J.C."/>
        </authorList>
    </citation>
    <scope>NUCLEOTIDE SEQUENCE [LARGE SCALE GENOMIC DNA]</scope>
</reference>
<reference key="6">
    <citation type="journal article" date="2004" name="Genome Res.">
        <title>The status, quality, and expansion of the NIH full-length cDNA project: the Mammalian Gene Collection (MGC).</title>
        <authorList>
            <consortium name="The MGC Project Team"/>
        </authorList>
    </citation>
    <scope>NUCLEOTIDE SEQUENCE [LARGE SCALE MRNA] (ISOFORM 1)</scope>
    <source>
        <tissue>Duodenum</tissue>
    </source>
</reference>
<reference key="7">
    <citation type="journal article" date="2004" name="Protein Sci.">
        <title>Signal peptide prediction based on analysis of experimentally verified cleavage sites.</title>
        <authorList>
            <person name="Zhang Z."/>
            <person name="Henzel W.J."/>
        </authorList>
    </citation>
    <scope>PROTEIN SEQUENCE OF 22-36 (ISOFORM 1)</scope>
</reference>
<reference evidence="13" key="8">
    <citation type="journal article" date="2020" name="Nat. Commun.">
        <title>NELL2-Robo3 complex structure reveals mechanisms of receptor activation for axon guidance.</title>
        <authorList>
            <person name="Pak J.S."/>
            <person name="DeLoughery Z.J."/>
            <person name="Wang J."/>
            <person name="Acharya N."/>
            <person name="Park Y."/>
            <person name="Jaworski A."/>
            <person name="Ozkan E."/>
        </authorList>
    </citation>
    <scope>X-RAY CRYSTALLOGRAPHY (2.75 ANGSTROMS) OF 397-638 IN COMPLEX WITH ROBO3</scope>
    <scope>FUNCTION</scope>
    <scope>SUBUNIT</scope>
    <scope>DISULFIDE BOND</scope>
    <scope>CALCIUM-BINDING</scope>
    <scope>GLYCOSYLATION AT ASN-517 AND THR-548</scope>
    <scope>MUTAGENESIS OF ARG-448; TYR-450; ARG-452; ASP-476; ASP-477; TYR-478; LEU-498; PHE-500 AND VAL-509</scope>
</reference>
<organism>
    <name type="scientific">Homo sapiens</name>
    <name type="common">Human</name>
    <dbReference type="NCBI Taxonomy" id="9606"/>
    <lineage>
        <taxon>Eukaryota</taxon>
        <taxon>Metazoa</taxon>
        <taxon>Chordata</taxon>
        <taxon>Craniata</taxon>
        <taxon>Vertebrata</taxon>
        <taxon>Euteleostomi</taxon>
        <taxon>Mammalia</taxon>
        <taxon>Eutheria</taxon>
        <taxon>Euarchontoglires</taxon>
        <taxon>Primates</taxon>
        <taxon>Haplorrhini</taxon>
        <taxon>Catarrhini</taxon>
        <taxon>Hominidae</taxon>
        <taxon>Homo</taxon>
    </lineage>
</organism>
<comment type="function">
    <text evidence="2 8">Plays multiple roles in neural tissues, regulates neuronal proliferation, survival, differentiation, polarization, as well as axon guidance and synaptic functions. Plays an important role in axon development during neuronal differentiation through the MAPK intracellular signaling pathway (By similarity). Via binding to its receptor ROBO3, plays a role in axon guidance, functioning as a repulsive axon guidance cue that contributes to commissural axon guidance to the midline (PubMed:32198364). Required for neuron survival through the modulation of MAPK signaling pathways too. Involved in the regulation of hypothalamic GNRH secretion and the control of puberty (By similarity).</text>
</comment>
<comment type="function">
    <text evidence="1">Epididymal-secreted protein that signals through a ROS1-pathway to regulate the epididymal initial segment (IS) maturation, sperm maturation and male fertility.</text>
</comment>
<comment type="subunit">
    <text evidence="1 2 8">Homotrimer (PubMed:32198364). Binds to PRKCB (By similarity). Interacts with NICOL1; this interaction triggers epididymal differentiation (By similarity). Interacts (via the EGF domains) with ROBO3 (via Fibronectin type-III 1 domain) with a 3:3 stoichiometry; this interaction promotes oligomerization of ROBO3 resulting in the repulsion of commissural axons in the midline (PubMed:32198364).</text>
</comment>
<comment type="interaction">
    <interactant intactId="EBI-946274">
        <id>Q99435</id>
    </interactant>
    <interactant intactId="EBI-946212">
        <id>Q5VTD9</id>
        <label>GFI1B</label>
    </interactant>
    <organismsDiffer>false</organismsDiffer>
    <experiments>2</experiments>
</comment>
<comment type="interaction">
    <interactant intactId="EBI-946274">
        <id>Q99435</id>
    </interactant>
    <interactant intactId="EBI-740785">
        <id>P49639</id>
        <label>HOXA1</label>
    </interactant>
    <organismsDiffer>false</organismsDiffer>
    <experiments>2</experiments>
</comment>
<comment type="interaction">
    <interactant intactId="EBI-946274">
        <id>Q99435</id>
    </interactant>
    <interactant intactId="EBI-867196">
        <id>Q9UIS9</id>
        <label>MBD1</label>
    </interactant>
    <organismsDiffer>false</organismsDiffer>
    <experiments>2</experiments>
</comment>
<comment type="interaction">
    <interactant intactId="EBI-946274">
        <id>Q99435</id>
    </interactant>
    <interactant intactId="EBI-1210753">
        <id>Q7Z417</id>
        <label>NUFIP2</label>
    </interactant>
    <organismsDiffer>false</organismsDiffer>
    <experiments>2</experiments>
</comment>
<comment type="interaction">
    <interactant intactId="EBI-946274">
        <id>Q99435</id>
    </interactant>
    <interactant intactId="EBI-1752330">
        <id>Q9BYB0</id>
        <label>SHANK3</label>
    </interactant>
    <organismsDiffer>false</organismsDiffer>
    <experiments>2</experiments>
</comment>
<comment type="interaction">
    <interactant intactId="EBI-16185191">
        <id>Q99435-1</id>
    </interactant>
    <interactant intactId="EBI-1220465">
        <id>Q96MS0</id>
        <label>ROBO3</label>
    </interactant>
    <organismsDiffer>false</organismsDiffer>
    <experiments>3</experiments>
</comment>
<comment type="interaction">
    <interactant intactId="EBI-17754404">
        <id>Q99435-2</id>
    </interactant>
    <interactant intactId="EBI-740785">
        <id>P49639</id>
        <label>HOXA1</label>
    </interactant>
    <organismsDiffer>false</organismsDiffer>
    <experiments>3</experiments>
</comment>
<comment type="interaction">
    <interactant intactId="EBI-17754404">
        <id>Q99435-2</id>
    </interactant>
    <interactant intactId="EBI-296151">
        <id>P37173</id>
        <label>TGFBR2</label>
    </interactant>
    <organismsDiffer>false</organismsDiffer>
    <experiments>3</experiments>
</comment>
<comment type="subcellular location">
    <subcellularLocation>
        <location evidence="2">Secreted</location>
    </subcellularLocation>
</comment>
<comment type="alternative products">
    <event type="alternative splicing"/>
    <isoform>
        <id>Q99435-1</id>
        <name>1</name>
        <sequence type="displayed"/>
    </isoform>
    <isoform>
        <id>Q99435-2</id>
        <name>2</name>
        <sequence type="described" ref="VSP_043801"/>
    </isoform>
    <isoform>
        <id>Q99435-3</id>
        <name>3</name>
        <sequence type="described" ref="VSP_043802"/>
    </isoform>
    <isoform>
        <id>Q99435-4</id>
        <name>4</name>
        <sequence type="described" ref="VSP_043869"/>
    </isoform>
</comment>
<dbReference type="EMBL" id="D83018">
    <property type="protein sequence ID" value="BAA11681.1"/>
    <property type="molecule type" value="mRNA"/>
</dbReference>
<dbReference type="EMBL" id="D89629">
    <property type="protein sequence ID" value="BAB46925.1"/>
    <property type="molecule type" value="mRNA"/>
</dbReference>
<dbReference type="EMBL" id="AK295125">
    <property type="protein sequence ID" value="BAH11983.1"/>
    <property type="molecule type" value="mRNA"/>
</dbReference>
<dbReference type="EMBL" id="AK299277">
    <property type="protein sequence ID" value="BAH12990.1"/>
    <property type="molecule type" value="mRNA"/>
</dbReference>
<dbReference type="EMBL" id="AK315960">
    <property type="protein sequence ID" value="BAH14331.1"/>
    <property type="molecule type" value="mRNA"/>
</dbReference>
<dbReference type="EMBL" id="AK316058">
    <property type="protein sequence ID" value="BAH14429.1"/>
    <property type="molecule type" value="mRNA"/>
</dbReference>
<dbReference type="EMBL" id="AC018923">
    <property type="status" value="NOT_ANNOTATED_CDS"/>
    <property type="molecule type" value="Genomic_DNA"/>
</dbReference>
<dbReference type="EMBL" id="AC025253">
    <property type="status" value="NOT_ANNOTATED_CDS"/>
    <property type="molecule type" value="Genomic_DNA"/>
</dbReference>
<dbReference type="EMBL" id="AC079033">
    <property type="status" value="NOT_ANNOTATED_CDS"/>
    <property type="molecule type" value="Genomic_DNA"/>
</dbReference>
<dbReference type="EMBL" id="AC079825">
    <property type="status" value="NOT_ANNOTATED_CDS"/>
    <property type="molecule type" value="Genomic_DNA"/>
</dbReference>
<dbReference type="EMBL" id="AC090012">
    <property type="status" value="NOT_ANNOTATED_CDS"/>
    <property type="molecule type" value="Genomic_DNA"/>
</dbReference>
<dbReference type="EMBL" id="CH471111">
    <property type="protein sequence ID" value="EAW57873.1"/>
    <property type="molecule type" value="Genomic_DNA"/>
</dbReference>
<dbReference type="EMBL" id="CH471111">
    <property type="protein sequence ID" value="EAW57874.1"/>
    <property type="molecule type" value="Genomic_DNA"/>
</dbReference>
<dbReference type="EMBL" id="CH471111">
    <property type="protein sequence ID" value="EAW57875.1"/>
    <property type="molecule type" value="Genomic_DNA"/>
</dbReference>
<dbReference type="EMBL" id="BC020544">
    <property type="protein sequence ID" value="AAH20544.1"/>
    <property type="molecule type" value="mRNA"/>
</dbReference>
<dbReference type="CCDS" id="CCDS44863.1">
    <molecule id="Q99435-3"/>
</dbReference>
<dbReference type="CCDS" id="CCDS44864.1">
    <molecule id="Q99435-4"/>
</dbReference>
<dbReference type="CCDS" id="CCDS53781.1">
    <molecule id="Q99435-2"/>
</dbReference>
<dbReference type="CCDS" id="CCDS8746.1">
    <molecule id="Q99435-1"/>
</dbReference>
<dbReference type="RefSeq" id="NP_001138579.1">
    <molecule id="Q99435-3"/>
    <property type="nucleotide sequence ID" value="NM_001145107.2"/>
</dbReference>
<dbReference type="RefSeq" id="NP_001138580.1">
    <molecule id="Q99435-1"/>
    <property type="nucleotide sequence ID" value="NM_001145108.2"/>
</dbReference>
<dbReference type="RefSeq" id="NP_001138581.1">
    <molecule id="Q99435-4"/>
    <property type="nucleotide sequence ID" value="NM_001145109.2"/>
</dbReference>
<dbReference type="RefSeq" id="NP_001138582.1">
    <molecule id="Q99435-2"/>
    <property type="nucleotide sequence ID" value="NM_001145110.2"/>
</dbReference>
<dbReference type="RefSeq" id="NP_006150.1">
    <molecule id="Q99435-1"/>
    <property type="nucleotide sequence ID" value="NM_006159.2"/>
</dbReference>
<dbReference type="RefSeq" id="XP_005268962.1">
    <property type="nucleotide sequence ID" value="XM_005268905.3"/>
</dbReference>
<dbReference type="RefSeq" id="XP_011536698.1">
    <molecule id="Q99435-1"/>
    <property type="nucleotide sequence ID" value="XM_011538396.2"/>
</dbReference>
<dbReference type="PDB" id="6POG">
    <property type="method" value="X-ray"/>
    <property type="resolution" value="2.75 A"/>
    <property type="chains" value="B=397-638"/>
</dbReference>
<dbReference type="PDBsum" id="6POG"/>
<dbReference type="SMR" id="Q99435"/>
<dbReference type="BioGRID" id="110828">
    <property type="interactions" value="55"/>
</dbReference>
<dbReference type="CORUM" id="Q99435"/>
<dbReference type="DIP" id="DIP-49927N"/>
<dbReference type="FunCoup" id="Q99435">
    <property type="interactions" value="313"/>
</dbReference>
<dbReference type="IntAct" id="Q99435">
    <property type="interactions" value="52"/>
</dbReference>
<dbReference type="MINT" id="Q99435"/>
<dbReference type="STRING" id="9606.ENSP00000416341"/>
<dbReference type="GlyCosmos" id="Q99435">
    <property type="glycosylation" value="9 sites, 1 glycan"/>
</dbReference>
<dbReference type="GlyGen" id="Q99435">
    <property type="glycosylation" value="10 sites, 1 N-linked glycan (1 site), 1 O-linked glycan (2 sites)"/>
</dbReference>
<dbReference type="iPTMnet" id="Q99435"/>
<dbReference type="PhosphoSitePlus" id="Q99435"/>
<dbReference type="BioMuta" id="NELL2"/>
<dbReference type="DMDM" id="2494289"/>
<dbReference type="jPOST" id="Q99435"/>
<dbReference type="MassIVE" id="Q99435"/>
<dbReference type="PaxDb" id="9606-ENSP00000416341"/>
<dbReference type="PeptideAtlas" id="Q99435"/>
<dbReference type="ProteomicsDB" id="78262">
    <molecule id="Q99435-1"/>
</dbReference>
<dbReference type="ProteomicsDB" id="78263">
    <molecule id="Q99435-2"/>
</dbReference>
<dbReference type="ProteomicsDB" id="78264">
    <molecule id="Q99435-3"/>
</dbReference>
<dbReference type="ProteomicsDB" id="78265">
    <molecule id="Q99435-4"/>
</dbReference>
<dbReference type="Antibodypedia" id="25202">
    <property type="antibodies" value="203 antibodies from 28 providers"/>
</dbReference>
<dbReference type="DNASU" id="4753"/>
<dbReference type="Ensembl" id="ENST00000333837.8">
    <molecule id="Q99435-2"/>
    <property type="protein sequence ID" value="ENSP00000327988.4"/>
    <property type="gene ID" value="ENSG00000184613.11"/>
</dbReference>
<dbReference type="Ensembl" id="ENST00000395487.6">
    <molecule id="Q99435-4"/>
    <property type="protein sequence ID" value="ENSP00000378866.2"/>
    <property type="gene ID" value="ENSG00000184613.11"/>
</dbReference>
<dbReference type="Ensembl" id="ENST00000429094.7">
    <molecule id="Q99435-1"/>
    <property type="protein sequence ID" value="ENSP00000390680.2"/>
    <property type="gene ID" value="ENSG00000184613.11"/>
</dbReference>
<dbReference type="Ensembl" id="ENST00000437801.6">
    <molecule id="Q99435-3"/>
    <property type="protein sequence ID" value="ENSP00000416341.2"/>
    <property type="gene ID" value="ENSG00000184613.11"/>
</dbReference>
<dbReference type="Ensembl" id="ENST00000452445.6">
    <molecule id="Q99435-1"/>
    <property type="protein sequence ID" value="ENSP00000394612.2"/>
    <property type="gene ID" value="ENSG00000184613.11"/>
</dbReference>
<dbReference type="Ensembl" id="ENST00000549027.5">
    <molecule id="Q99435-4"/>
    <property type="protein sequence ID" value="ENSP00000447927.1"/>
    <property type="gene ID" value="ENSG00000184613.11"/>
</dbReference>
<dbReference type="GeneID" id="4753"/>
<dbReference type="KEGG" id="hsa:4753"/>
<dbReference type="MANE-Select" id="ENST00000429094.7">
    <property type="protein sequence ID" value="ENSP00000390680.2"/>
    <property type="RefSeq nucleotide sequence ID" value="NM_001145108.2"/>
    <property type="RefSeq protein sequence ID" value="NP_001138580.1"/>
</dbReference>
<dbReference type="UCSC" id="uc001rof.4">
    <molecule id="Q99435-1"/>
    <property type="organism name" value="human"/>
</dbReference>
<dbReference type="AGR" id="HGNC:7751"/>
<dbReference type="CTD" id="4753"/>
<dbReference type="DisGeNET" id="4753"/>
<dbReference type="GeneCards" id="NELL2"/>
<dbReference type="HGNC" id="HGNC:7751">
    <property type="gene designation" value="NELL2"/>
</dbReference>
<dbReference type="HPA" id="ENSG00000184613">
    <property type="expression patterns" value="Tissue enhanced (brain, choroid plexus, retina)"/>
</dbReference>
<dbReference type="MIM" id="602320">
    <property type="type" value="gene"/>
</dbReference>
<dbReference type="neXtProt" id="NX_Q99435"/>
<dbReference type="OpenTargets" id="ENSG00000184613"/>
<dbReference type="PharmGKB" id="PA31553"/>
<dbReference type="VEuPathDB" id="HostDB:ENSG00000184613"/>
<dbReference type="eggNOG" id="KOG1217">
    <property type="taxonomic scope" value="Eukaryota"/>
</dbReference>
<dbReference type="GeneTree" id="ENSGT00810000125439"/>
<dbReference type="HOGENOM" id="CLU_006887_0_0_1"/>
<dbReference type="InParanoid" id="Q99435"/>
<dbReference type="OMA" id="PENECCQ"/>
<dbReference type="OrthoDB" id="6516201at2759"/>
<dbReference type="PAN-GO" id="Q99435">
    <property type="GO annotations" value="3 GO annotations based on evolutionary models"/>
</dbReference>
<dbReference type="PhylomeDB" id="Q99435"/>
<dbReference type="TreeFam" id="TF323325"/>
<dbReference type="PathwayCommons" id="Q99435"/>
<dbReference type="Reactome" id="R-HSA-428542">
    <property type="pathway name" value="Regulation of commissural axon pathfinding by SLIT and ROBO"/>
</dbReference>
<dbReference type="SignaLink" id="Q99435"/>
<dbReference type="BioGRID-ORCS" id="4753">
    <property type="hits" value="10 hits in 1145 CRISPR screens"/>
</dbReference>
<dbReference type="ChiTaRS" id="NELL2">
    <property type="organism name" value="human"/>
</dbReference>
<dbReference type="GeneWiki" id="NELL2"/>
<dbReference type="GenomeRNAi" id="4753"/>
<dbReference type="Pharos" id="Q99435">
    <property type="development level" value="Tbio"/>
</dbReference>
<dbReference type="PRO" id="PR:Q99435"/>
<dbReference type="Proteomes" id="UP000005640">
    <property type="component" value="Chromosome 12"/>
</dbReference>
<dbReference type="RNAct" id="Q99435">
    <property type="molecule type" value="protein"/>
</dbReference>
<dbReference type="Bgee" id="ENSG00000184613">
    <property type="expression patterns" value="Expressed in middle temporal gyrus and 184 other cell types or tissues"/>
</dbReference>
<dbReference type="ExpressionAtlas" id="Q99435">
    <property type="expression patterns" value="baseline and differential"/>
</dbReference>
<dbReference type="GO" id="GO:0005737">
    <property type="term" value="C:cytoplasm"/>
    <property type="evidence" value="ECO:0000318"/>
    <property type="project" value="GO_Central"/>
</dbReference>
<dbReference type="GO" id="GO:0005576">
    <property type="term" value="C:extracellular region"/>
    <property type="evidence" value="ECO:0000250"/>
    <property type="project" value="UniProtKB"/>
</dbReference>
<dbReference type="GO" id="GO:0005615">
    <property type="term" value="C:extracellular space"/>
    <property type="evidence" value="ECO:0000318"/>
    <property type="project" value="GO_Central"/>
</dbReference>
<dbReference type="GO" id="GO:0005509">
    <property type="term" value="F:calcium ion binding"/>
    <property type="evidence" value="ECO:0000314"/>
    <property type="project" value="UniProtKB"/>
</dbReference>
<dbReference type="GO" id="GO:0008201">
    <property type="term" value="F:heparin binding"/>
    <property type="evidence" value="ECO:0000318"/>
    <property type="project" value="GO_Central"/>
</dbReference>
<dbReference type="GO" id="GO:0042802">
    <property type="term" value="F:identical protein binding"/>
    <property type="evidence" value="ECO:0000314"/>
    <property type="project" value="UniProtKB"/>
</dbReference>
<dbReference type="GO" id="GO:0005080">
    <property type="term" value="F:protein kinase C binding"/>
    <property type="evidence" value="ECO:0000318"/>
    <property type="project" value="GO_Central"/>
</dbReference>
<dbReference type="GO" id="GO:0071679">
    <property type="term" value="P:commissural neuron axon guidance"/>
    <property type="evidence" value="ECO:0000315"/>
    <property type="project" value="UniProtKB"/>
</dbReference>
<dbReference type="GO" id="GO:0009566">
    <property type="term" value="P:fertilization"/>
    <property type="evidence" value="ECO:0000250"/>
    <property type="project" value="UniProtKB"/>
</dbReference>
<dbReference type="GO" id="GO:0070050">
    <property type="term" value="P:neuron cellular homeostasis"/>
    <property type="evidence" value="ECO:0000250"/>
    <property type="project" value="UniProtKB"/>
</dbReference>
<dbReference type="CDD" id="cd00054">
    <property type="entry name" value="EGF_CA"/>
    <property type="match status" value="3"/>
</dbReference>
<dbReference type="CDD" id="cd00110">
    <property type="entry name" value="LamG"/>
    <property type="match status" value="1"/>
</dbReference>
<dbReference type="FunFam" id="2.10.25.10:FF:000121">
    <property type="entry name" value="Neural EGFL like 2"/>
    <property type="match status" value="1"/>
</dbReference>
<dbReference type="FunFam" id="2.10.25.10:FF:000120">
    <property type="entry name" value="Protein kinase C-binding protein NELL1"/>
    <property type="match status" value="1"/>
</dbReference>
<dbReference type="FunFam" id="2.10.25.10:FF:000211">
    <property type="entry name" value="Protein kinase C-binding protein NELL1"/>
    <property type="match status" value="1"/>
</dbReference>
<dbReference type="FunFam" id="2.60.120.200:FF:000015">
    <property type="entry name" value="protein kinase C-binding protein NELL1"/>
    <property type="match status" value="1"/>
</dbReference>
<dbReference type="FunFam" id="2.10.25.10:FF:000102">
    <property type="entry name" value="Protein kinase C-binding protein NELL2"/>
    <property type="match status" value="1"/>
</dbReference>
<dbReference type="FunFam" id="2.10.25.10:FF:000111">
    <property type="entry name" value="Protein kinase C-binding protein NELL2"/>
    <property type="match status" value="1"/>
</dbReference>
<dbReference type="FunFam" id="2.10.70.10:FF:000023">
    <property type="entry name" value="protein kinase C-binding protein NELL2"/>
    <property type="match status" value="1"/>
</dbReference>
<dbReference type="Gene3D" id="2.60.120.200">
    <property type="match status" value="1"/>
</dbReference>
<dbReference type="Gene3D" id="6.20.200.20">
    <property type="match status" value="2"/>
</dbReference>
<dbReference type="Gene3D" id="2.10.70.10">
    <property type="entry name" value="Complement Module, domain 1"/>
    <property type="match status" value="1"/>
</dbReference>
<dbReference type="Gene3D" id="2.10.25.10">
    <property type="entry name" value="Laminin"/>
    <property type="match status" value="6"/>
</dbReference>
<dbReference type="InterPro" id="IPR013320">
    <property type="entry name" value="ConA-like_dom_sf"/>
</dbReference>
<dbReference type="InterPro" id="IPR001881">
    <property type="entry name" value="EGF-like_Ca-bd_dom"/>
</dbReference>
<dbReference type="InterPro" id="IPR000742">
    <property type="entry name" value="EGF-like_dom"/>
</dbReference>
<dbReference type="InterPro" id="IPR000152">
    <property type="entry name" value="EGF-type_Asp/Asn_hydroxyl_site"/>
</dbReference>
<dbReference type="InterPro" id="IPR018097">
    <property type="entry name" value="EGF_Ca-bd_CS"/>
</dbReference>
<dbReference type="InterPro" id="IPR024731">
    <property type="entry name" value="EGF_dom"/>
</dbReference>
<dbReference type="InterPro" id="IPR009030">
    <property type="entry name" value="Growth_fac_rcpt_cys_sf"/>
</dbReference>
<dbReference type="InterPro" id="IPR001791">
    <property type="entry name" value="Laminin_G"/>
</dbReference>
<dbReference type="InterPro" id="IPR049883">
    <property type="entry name" value="NOTCH1_EGF-like"/>
</dbReference>
<dbReference type="InterPro" id="IPR051586">
    <property type="entry name" value="PKC-binding_NELL"/>
</dbReference>
<dbReference type="InterPro" id="IPR048287">
    <property type="entry name" value="TSPN-like_N"/>
</dbReference>
<dbReference type="InterPro" id="IPR001007">
    <property type="entry name" value="VWF_dom"/>
</dbReference>
<dbReference type="PANTHER" id="PTHR24042">
    <property type="entry name" value="NEL HOMOLOG"/>
    <property type="match status" value="1"/>
</dbReference>
<dbReference type="PANTHER" id="PTHR24042:SF0">
    <property type="entry name" value="PROTEIN KINASE C-BINDING PROTEIN NELL2"/>
    <property type="match status" value="1"/>
</dbReference>
<dbReference type="Pfam" id="PF12947">
    <property type="entry name" value="EGF_3"/>
    <property type="match status" value="1"/>
</dbReference>
<dbReference type="Pfam" id="PF07645">
    <property type="entry name" value="EGF_CA"/>
    <property type="match status" value="3"/>
</dbReference>
<dbReference type="Pfam" id="PF02210">
    <property type="entry name" value="Laminin_G_2"/>
    <property type="match status" value="1"/>
</dbReference>
<dbReference type="Pfam" id="PF00093">
    <property type="entry name" value="VWC"/>
    <property type="match status" value="2"/>
</dbReference>
<dbReference type="SMART" id="SM00181">
    <property type="entry name" value="EGF"/>
    <property type="match status" value="6"/>
</dbReference>
<dbReference type="SMART" id="SM00179">
    <property type="entry name" value="EGF_CA"/>
    <property type="match status" value="5"/>
</dbReference>
<dbReference type="SMART" id="SM00282">
    <property type="entry name" value="LamG"/>
    <property type="match status" value="1"/>
</dbReference>
<dbReference type="SMART" id="SM00210">
    <property type="entry name" value="TSPN"/>
    <property type="match status" value="1"/>
</dbReference>
<dbReference type="SMART" id="SM00214">
    <property type="entry name" value="VWC"/>
    <property type="match status" value="3"/>
</dbReference>
<dbReference type="SMART" id="SM00215">
    <property type="entry name" value="VWC_out"/>
    <property type="match status" value="2"/>
</dbReference>
<dbReference type="SUPFAM" id="SSF49899">
    <property type="entry name" value="Concanavalin A-like lectins/glucanases"/>
    <property type="match status" value="1"/>
</dbReference>
<dbReference type="SUPFAM" id="SSF57196">
    <property type="entry name" value="EGF/Laminin"/>
    <property type="match status" value="2"/>
</dbReference>
<dbReference type="SUPFAM" id="SSF57603">
    <property type="entry name" value="FnI-like domain"/>
    <property type="match status" value="2"/>
</dbReference>
<dbReference type="SUPFAM" id="SSF57184">
    <property type="entry name" value="Growth factor receptor domain"/>
    <property type="match status" value="1"/>
</dbReference>
<dbReference type="PROSITE" id="PS00010">
    <property type="entry name" value="ASX_HYDROXYL"/>
    <property type="match status" value="3"/>
</dbReference>
<dbReference type="PROSITE" id="PS00022">
    <property type="entry name" value="EGF_1"/>
    <property type="match status" value="1"/>
</dbReference>
<dbReference type="PROSITE" id="PS01186">
    <property type="entry name" value="EGF_2"/>
    <property type="match status" value="4"/>
</dbReference>
<dbReference type="PROSITE" id="PS50026">
    <property type="entry name" value="EGF_3"/>
    <property type="match status" value="6"/>
</dbReference>
<dbReference type="PROSITE" id="PS01187">
    <property type="entry name" value="EGF_CA"/>
    <property type="match status" value="3"/>
</dbReference>
<dbReference type="PROSITE" id="PS01208">
    <property type="entry name" value="VWFC_1"/>
    <property type="match status" value="2"/>
</dbReference>
<dbReference type="PROSITE" id="PS50184">
    <property type="entry name" value="VWFC_2"/>
    <property type="match status" value="3"/>
</dbReference>
<accession>Q99435</accession>
<accession>B7Z2U7</accession>
<accession>B7Z5Q4</accession>
<accession>B7Z9J5</accession>
<accession>B7Z9U3</accession>
<accession>Q96JS2</accession>
<protein>
    <recommendedName>
        <fullName>Protein kinase C-binding protein NELL2</fullName>
    </recommendedName>
    <alternativeName>
        <fullName>NEL-like protein 2</fullName>
    </alternativeName>
    <alternativeName>
        <fullName>Nel-related protein 2</fullName>
    </alternativeName>
</protein>
<name>NELL2_HUMAN</name>
<sequence length="816" mass="91346">MESRVLLRTFCLIFGLGAVWGLGVDPSLQIDVLTELELGESTTGVRQVPGLHNGTKAFLFQDTPRSIKASTATAEQFFQKLRNKHEFTILVTLKQTHLNSGVILSIHHLDHRYLELESSGHRNEVRLHYRSGSHRPHTEVFPYILADDKWHKLSLAISASHLILHIDCNKIYERVVEKPSTDLPLGTTFWLGQRNNAHGYFKGIMQDVQLLVMPQGFIAQCPDLNRTCPTCNDFHGLVQKIMELQDILAKTSAKLSRAEQRMNRLDQCYCERTCTMKGTTYREFESWIDGCKNCTCLNGTIQCETLICPNPDCPLKSALAYVDGKCCKECKSICQFQGRTYFEGERNTVYSSSGVCVLYECKDQTMKLVESSGCPALDCPESHQITLSHSCCKVCKGYDFCSERHNCMENSICRNLNDRAVCSCRDGFRALREDNAYCEDIDECAEGRHYCRENTMCVNTPGSFMCICKTGYIRIDDYSCTEHDECITNQHNCDENALCFNTVGGHNCVCKPGYTGNGTTCKAFCKDGCRNGGACIAANVCACPQGFTGPSCETDIDECSDGFVQCDSRANCINLPGWYHCECRDGYHDNGMFSPSGESCEDIDECGTGRHSCANDTICFNLDGGYDCRCPHGKNCTGDCIHDGKVKHNGQIWVLENDRCSVCSCQNGFVMCRRMVCDCENPTVDLFCCPECDPRLSSQCLHQNGETLYNSGDTWVQNCQQCRCLQGEVDCWPLPCPDVECEFSILPENECCPRCVTDPCQADTIRNDITKTCLDEMNVVRFTGSSWIKHGTECTLCQCKNGHICCSVDPQCLQEL</sequence>
<evidence type="ECO:0000250" key="1">
    <source>
        <dbReference type="UniProtKB" id="Q61220"/>
    </source>
</evidence>
<evidence type="ECO:0000250" key="2">
    <source>
        <dbReference type="UniProtKB" id="Q62918"/>
    </source>
</evidence>
<evidence type="ECO:0000255" key="3"/>
<evidence type="ECO:0000255" key="4">
    <source>
        <dbReference type="PROSITE-ProRule" id="PRU00076"/>
    </source>
</evidence>
<evidence type="ECO:0000255" key="5">
    <source>
        <dbReference type="PROSITE-ProRule" id="PRU00122"/>
    </source>
</evidence>
<evidence type="ECO:0000255" key="6">
    <source>
        <dbReference type="PROSITE-ProRule" id="PRU00220"/>
    </source>
</evidence>
<evidence type="ECO:0000269" key="7">
    <source>
    </source>
</evidence>
<evidence type="ECO:0000269" key="8">
    <source>
    </source>
</evidence>
<evidence type="ECO:0000303" key="9">
    <source>
    </source>
</evidence>
<evidence type="ECO:0000303" key="10">
    <source ref="2"/>
</evidence>
<evidence type="ECO:0000305" key="11"/>
<evidence type="ECO:0000312" key="12">
    <source>
        <dbReference type="HGNC" id="HGNC:7751"/>
    </source>
</evidence>
<evidence type="ECO:0007744" key="13">
    <source>
        <dbReference type="PDB" id="6POG"/>
    </source>
</evidence>
<evidence type="ECO:0007829" key="14">
    <source>
        <dbReference type="PDB" id="6POG"/>
    </source>
</evidence>
<gene>
    <name evidence="12" type="primary">NELL2</name>
    <name type="synonym">NRP2</name>
</gene>